<keyword id="KW-0156">Chromatin regulator</keyword>
<keyword id="KW-1017">Isopeptide bond</keyword>
<keyword id="KW-0479">Metal-binding</keyword>
<keyword id="KW-0539">Nucleus</keyword>
<keyword id="KW-0597">Phosphoprotein</keyword>
<keyword id="KW-1185">Reference proteome</keyword>
<keyword id="KW-0677">Repeat</keyword>
<keyword id="KW-0804">Transcription</keyword>
<keyword id="KW-0805">Transcription regulation</keyword>
<keyword id="KW-0832">Ubl conjugation</keyword>
<keyword id="KW-0862">Zinc</keyword>
<keyword id="KW-0863">Zinc-finger</keyword>
<reference key="1">
    <citation type="journal article" date="2003" name="Gene">
        <title>Proliferation-linked expression of the novel murine gene m4mbt encoding a nuclear zinc finger protein with four mbt domains.</title>
        <authorList>
            <person name="Markus J."/>
            <person name="Feikova S."/>
            <person name="Sramko M."/>
            <person name="Wolff L."/>
            <person name="Bies J."/>
        </authorList>
    </citation>
    <scope>NUCLEOTIDE SEQUENCE [MRNA]</scope>
    <scope>SUBCELLULAR LOCATION</scope>
    <scope>PHOSPHORYLATION</scope>
    <scope>TISSUE SPECIFICITY</scope>
    <source>
        <strain>Swiss Webster</strain>
    </source>
</reference>
<reference key="2">
    <citation type="journal article" date="2005" name="Science">
        <title>The transcriptional landscape of the mammalian genome.</title>
        <authorList>
            <person name="Carninci P."/>
            <person name="Kasukawa T."/>
            <person name="Katayama S."/>
            <person name="Gough J."/>
            <person name="Frith M.C."/>
            <person name="Maeda N."/>
            <person name="Oyama R."/>
            <person name="Ravasi T."/>
            <person name="Lenhard B."/>
            <person name="Wells C."/>
            <person name="Kodzius R."/>
            <person name="Shimokawa K."/>
            <person name="Bajic V.B."/>
            <person name="Brenner S.E."/>
            <person name="Batalov S."/>
            <person name="Forrest A.R."/>
            <person name="Zavolan M."/>
            <person name="Davis M.J."/>
            <person name="Wilming L.G."/>
            <person name="Aidinis V."/>
            <person name="Allen J.E."/>
            <person name="Ambesi-Impiombato A."/>
            <person name="Apweiler R."/>
            <person name="Aturaliya R.N."/>
            <person name="Bailey T.L."/>
            <person name="Bansal M."/>
            <person name="Baxter L."/>
            <person name="Beisel K.W."/>
            <person name="Bersano T."/>
            <person name="Bono H."/>
            <person name="Chalk A.M."/>
            <person name="Chiu K.P."/>
            <person name="Choudhary V."/>
            <person name="Christoffels A."/>
            <person name="Clutterbuck D.R."/>
            <person name="Crowe M.L."/>
            <person name="Dalla E."/>
            <person name="Dalrymple B.P."/>
            <person name="de Bono B."/>
            <person name="Della Gatta G."/>
            <person name="di Bernardo D."/>
            <person name="Down T."/>
            <person name="Engstrom P."/>
            <person name="Fagiolini M."/>
            <person name="Faulkner G."/>
            <person name="Fletcher C.F."/>
            <person name="Fukushima T."/>
            <person name="Furuno M."/>
            <person name="Futaki S."/>
            <person name="Gariboldi M."/>
            <person name="Georgii-Hemming P."/>
            <person name="Gingeras T.R."/>
            <person name="Gojobori T."/>
            <person name="Green R.E."/>
            <person name="Gustincich S."/>
            <person name="Harbers M."/>
            <person name="Hayashi Y."/>
            <person name="Hensch T.K."/>
            <person name="Hirokawa N."/>
            <person name="Hill D."/>
            <person name="Huminiecki L."/>
            <person name="Iacono M."/>
            <person name="Ikeo K."/>
            <person name="Iwama A."/>
            <person name="Ishikawa T."/>
            <person name="Jakt M."/>
            <person name="Kanapin A."/>
            <person name="Katoh M."/>
            <person name="Kawasawa Y."/>
            <person name="Kelso J."/>
            <person name="Kitamura H."/>
            <person name="Kitano H."/>
            <person name="Kollias G."/>
            <person name="Krishnan S.P."/>
            <person name="Kruger A."/>
            <person name="Kummerfeld S.K."/>
            <person name="Kurochkin I.V."/>
            <person name="Lareau L.F."/>
            <person name="Lazarevic D."/>
            <person name="Lipovich L."/>
            <person name="Liu J."/>
            <person name="Liuni S."/>
            <person name="McWilliam S."/>
            <person name="Madan Babu M."/>
            <person name="Madera M."/>
            <person name="Marchionni L."/>
            <person name="Matsuda H."/>
            <person name="Matsuzawa S."/>
            <person name="Miki H."/>
            <person name="Mignone F."/>
            <person name="Miyake S."/>
            <person name="Morris K."/>
            <person name="Mottagui-Tabar S."/>
            <person name="Mulder N."/>
            <person name="Nakano N."/>
            <person name="Nakauchi H."/>
            <person name="Ng P."/>
            <person name="Nilsson R."/>
            <person name="Nishiguchi S."/>
            <person name="Nishikawa S."/>
            <person name="Nori F."/>
            <person name="Ohara O."/>
            <person name="Okazaki Y."/>
            <person name="Orlando V."/>
            <person name="Pang K.C."/>
            <person name="Pavan W.J."/>
            <person name="Pavesi G."/>
            <person name="Pesole G."/>
            <person name="Petrovsky N."/>
            <person name="Piazza S."/>
            <person name="Reed J."/>
            <person name="Reid J.F."/>
            <person name="Ring B.Z."/>
            <person name="Ringwald M."/>
            <person name="Rost B."/>
            <person name="Ruan Y."/>
            <person name="Salzberg S.L."/>
            <person name="Sandelin A."/>
            <person name="Schneider C."/>
            <person name="Schoenbach C."/>
            <person name="Sekiguchi K."/>
            <person name="Semple C.A."/>
            <person name="Seno S."/>
            <person name="Sessa L."/>
            <person name="Sheng Y."/>
            <person name="Shibata Y."/>
            <person name="Shimada H."/>
            <person name="Shimada K."/>
            <person name="Silva D."/>
            <person name="Sinclair B."/>
            <person name="Sperling S."/>
            <person name="Stupka E."/>
            <person name="Sugiura K."/>
            <person name="Sultana R."/>
            <person name="Takenaka Y."/>
            <person name="Taki K."/>
            <person name="Tammoja K."/>
            <person name="Tan S.L."/>
            <person name="Tang S."/>
            <person name="Taylor M.S."/>
            <person name="Tegner J."/>
            <person name="Teichmann S.A."/>
            <person name="Ueda H.R."/>
            <person name="van Nimwegen E."/>
            <person name="Verardo R."/>
            <person name="Wei C.L."/>
            <person name="Yagi K."/>
            <person name="Yamanishi H."/>
            <person name="Zabarovsky E."/>
            <person name="Zhu S."/>
            <person name="Zimmer A."/>
            <person name="Hide W."/>
            <person name="Bult C."/>
            <person name="Grimmond S.M."/>
            <person name="Teasdale R.D."/>
            <person name="Liu E.T."/>
            <person name="Brusic V."/>
            <person name="Quackenbush J."/>
            <person name="Wahlestedt C."/>
            <person name="Mattick J.S."/>
            <person name="Hume D.A."/>
            <person name="Kai C."/>
            <person name="Sasaki D."/>
            <person name="Tomaru Y."/>
            <person name="Fukuda S."/>
            <person name="Kanamori-Katayama M."/>
            <person name="Suzuki M."/>
            <person name="Aoki J."/>
            <person name="Arakawa T."/>
            <person name="Iida J."/>
            <person name="Imamura K."/>
            <person name="Itoh M."/>
            <person name="Kato T."/>
            <person name="Kawaji H."/>
            <person name="Kawagashira N."/>
            <person name="Kawashima T."/>
            <person name="Kojima M."/>
            <person name="Kondo S."/>
            <person name="Konno H."/>
            <person name="Nakano K."/>
            <person name="Ninomiya N."/>
            <person name="Nishio T."/>
            <person name="Okada M."/>
            <person name="Plessy C."/>
            <person name="Shibata K."/>
            <person name="Shiraki T."/>
            <person name="Suzuki S."/>
            <person name="Tagami M."/>
            <person name="Waki K."/>
            <person name="Watahiki A."/>
            <person name="Okamura-Oho Y."/>
            <person name="Suzuki H."/>
            <person name="Kawai J."/>
            <person name="Hayashizaki Y."/>
        </authorList>
    </citation>
    <scope>NUCLEOTIDE SEQUENCE [LARGE SCALE MRNA]</scope>
    <source>
        <strain>C57BL/6J</strain>
        <tissue>Bone</tissue>
        <tissue>Skin</tissue>
    </source>
</reference>
<reference key="3">
    <citation type="submission" date="2005-09" db="EMBL/GenBank/DDBJ databases">
        <authorList>
            <person name="Mural R.J."/>
            <person name="Adams M.D."/>
            <person name="Myers E.W."/>
            <person name="Smith H.O."/>
            <person name="Venter J.C."/>
        </authorList>
    </citation>
    <scope>NUCLEOTIDE SEQUENCE [LARGE SCALE GENOMIC DNA]</scope>
</reference>
<reference key="4">
    <citation type="journal article" date="2004" name="Genome Res.">
        <title>The status, quality, and expansion of the NIH full-length cDNA project: the Mammalian Gene Collection (MGC).</title>
        <authorList>
            <consortium name="The MGC Project Team"/>
        </authorList>
    </citation>
    <scope>NUCLEOTIDE SEQUENCE [LARGE SCALE MRNA]</scope>
    <source>
        <strain>FVB/N</strain>
        <tissue>Liver</tissue>
        <tissue>Mammary gland</tissue>
    </source>
</reference>
<evidence type="ECO:0000250" key="1"/>
<evidence type="ECO:0000250" key="2">
    <source>
        <dbReference type="UniProtKB" id="Q3MIF2"/>
    </source>
</evidence>
<evidence type="ECO:0000250" key="3">
    <source>
        <dbReference type="UniProtKB" id="Q969R5"/>
    </source>
</evidence>
<evidence type="ECO:0000255" key="4">
    <source>
        <dbReference type="PROSITE-ProRule" id="PRU00367"/>
    </source>
</evidence>
<evidence type="ECO:0000256" key="5">
    <source>
        <dbReference type="SAM" id="MobiDB-lite"/>
    </source>
</evidence>
<evidence type="ECO:0000269" key="6">
    <source>
    </source>
</evidence>
<evidence type="ECO:0000305" key="7"/>
<dbReference type="EMBL" id="AY237000">
    <property type="protein sequence ID" value="AAP44771.1"/>
    <property type="molecule type" value="mRNA"/>
</dbReference>
<dbReference type="EMBL" id="AK029115">
    <property type="protein sequence ID" value="BAC26305.1"/>
    <property type="molecule type" value="mRNA"/>
</dbReference>
<dbReference type="EMBL" id="AK036510">
    <property type="protein sequence ID" value="BAC29456.1"/>
    <property type="molecule type" value="mRNA"/>
</dbReference>
<dbReference type="EMBL" id="CH466550">
    <property type="protein sequence ID" value="EDL04569.1"/>
    <property type="molecule type" value="Genomic_DNA"/>
</dbReference>
<dbReference type="EMBL" id="BC023933">
    <property type="protein sequence ID" value="AAH23933.1"/>
    <property type="molecule type" value="mRNA"/>
</dbReference>
<dbReference type="EMBL" id="BC030864">
    <property type="protein sequence ID" value="AAH30864.1"/>
    <property type="molecule type" value="mRNA"/>
</dbReference>
<dbReference type="CCDS" id="CCDS27669.1"/>
<dbReference type="RefSeq" id="NP_666105.2">
    <property type="nucleotide sequence ID" value="NM_145993.5"/>
</dbReference>
<dbReference type="SMR" id="P59178"/>
<dbReference type="BioGRID" id="229554">
    <property type="interactions" value="53"/>
</dbReference>
<dbReference type="FunCoup" id="P59178">
    <property type="interactions" value="3696"/>
</dbReference>
<dbReference type="IntAct" id="P59178">
    <property type="interactions" value="15"/>
</dbReference>
<dbReference type="MINT" id="P59178"/>
<dbReference type="STRING" id="10090.ENSMUSP00000133967"/>
<dbReference type="iPTMnet" id="P59178"/>
<dbReference type="PhosphoSitePlus" id="P59178"/>
<dbReference type="PaxDb" id="10090-ENSMUSP00000023029"/>
<dbReference type="PeptideAtlas" id="P59178"/>
<dbReference type="ProteomicsDB" id="290041"/>
<dbReference type="Antibodypedia" id="204">
    <property type="antibodies" value="215 antibodies from 29 providers"/>
</dbReference>
<dbReference type="DNASU" id="214669"/>
<dbReference type="Ensembl" id="ENSMUST00000023029.15">
    <property type="protein sequence ID" value="ENSMUSP00000023029.9"/>
    <property type="gene ID" value="ENSMUSG00000022394.15"/>
</dbReference>
<dbReference type="GeneID" id="214669"/>
<dbReference type="KEGG" id="mmu:214669"/>
<dbReference type="UCSC" id="uc007wwu.2">
    <property type="organism name" value="mouse"/>
</dbReference>
<dbReference type="AGR" id="MGI:2443584"/>
<dbReference type="CTD" id="83746"/>
<dbReference type="MGI" id="MGI:2443584">
    <property type="gene designation" value="L3mbtl2"/>
</dbReference>
<dbReference type="VEuPathDB" id="HostDB:ENSMUSG00000022394"/>
<dbReference type="eggNOG" id="KOG3766">
    <property type="taxonomic scope" value="Eukaryota"/>
</dbReference>
<dbReference type="GeneTree" id="ENSGT00940000153840"/>
<dbReference type="HOGENOM" id="CLU_005352_2_1_1"/>
<dbReference type="InParanoid" id="P59178"/>
<dbReference type="OMA" id="QVNYPGP"/>
<dbReference type="OrthoDB" id="5800688at2759"/>
<dbReference type="TreeFam" id="TF316498"/>
<dbReference type="Reactome" id="R-MMU-4551638">
    <property type="pathway name" value="SUMOylation of chromatin organization proteins"/>
</dbReference>
<dbReference type="Reactome" id="R-MMU-8953750">
    <property type="pathway name" value="Transcriptional Regulation by E2F6"/>
</dbReference>
<dbReference type="BioGRID-ORCS" id="214669">
    <property type="hits" value="6 hits in 80 CRISPR screens"/>
</dbReference>
<dbReference type="ChiTaRS" id="L3mbtl2">
    <property type="organism name" value="mouse"/>
</dbReference>
<dbReference type="PRO" id="PR:P59178"/>
<dbReference type="Proteomes" id="UP000000589">
    <property type="component" value="Chromosome 15"/>
</dbReference>
<dbReference type="RNAct" id="P59178">
    <property type="molecule type" value="protein"/>
</dbReference>
<dbReference type="Bgee" id="ENSMUSG00000022394">
    <property type="expression patterns" value="Expressed in floor plate of midbrain and 224 other cell types or tissues"/>
</dbReference>
<dbReference type="ExpressionAtlas" id="P59178">
    <property type="expression patterns" value="baseline and differential"/>
</dbReference>
<dbReference type="GO" id="GO:0005634">
    <property type="term" value="C:nucleus"/>
    <property type="evidence" value="ECO:0000314"/>
    <property type="project" value="MGI"/>
</dbReference>
<dbReference type="GO" id="GO:0042393">
    <property type="term" value="F:histone binding"/>
    <property type="evidence" value="ECO:0007669"/>
    <property type="project" value="Ensembl"/>
</dbReference>
<dbReference type="GO" id="GO:0140005">
    <property type="term" value="F:histone H4K20me2 reader activity"/>
    <property type="evidence" value="ECO:0000250"/>
    <property type="project" value="UniProtKB"/>
</dbReference>
<dbReference type="GO" id="GO:1990841">
    <property type="term" value="F:promoter-specific chromatin binding"/>
    <property type="evidence" value="ECO:0000314"/>
    <property type="project" value="MGI"/>
</dbReference>
<dbReference type="GO" id="GO:0008270">
    <property type="term" value="F:zinc ion binding"/>
    <property type="evidence" value="ECO:0007669"/>
    <property type="project" value="UniProtKB-KW"/>
</dbReference>
<dbReference type="GO" id="GO:0006325">
    <property type="term" value="P:chromatin organization"/>
    <property type="evidence" value="ECO:0000315"/>
    <property type="project" value="MGI"/>
</dbReference>
<dbReference type="GO" id="GO:0007398">
    <property type="term" value="P:ectoderm development"/>
    <property type="evidence" value="ECO:0000315"/>
    <property type="project" value="MGI"/>
</dbReference>
<dbReference type="GO" id="GO:0010629">
    <property type="term" value="P:negative regulation of gene expression"/>
    <property type="evidence" value="ECO:0000315"/>
    <property type="project" value="MGI"/>
</dbReference>
<dbReference type="GO" id="GO:0006355">
    <property type="term" value="P:regulation of DNA-templated transcription"/>
    <property type="evidence" value="ECO:0007669"/>
    <property type="project" value="InterPro"/>
</dbReference>
<dbReference type="GO" id="GO:0048863">
    <property type="term" value="P:stem cell differentiation"/>
    <property type="evidence" value="ECO:0000315"/>
    <property type="project" value="MGI"/>
</dbReference>
<dbReference type="GO" id="GO:0072089">
    <property type="term" value="P:stem cell proliferation"/>
    <property type="evidence" value="ECO:0000314"/>
    <property type="project" value="MGI"/>
</dbReference>
<dbReference type="CDD" id="cd20100">
    <property type="entry name" value="MBT_dSfmbt-like_rpt4"/>
    <property type="match status" value="1"/>
</dbReference>
<dbReference type="CDD" id="cd20121">
    <property type="entry name" value="MBT_L3MBTL2_rpt1"/>
    <property type="match status" value="1"/>
</dbReference>
<dbReference type="CDD" id="cd20124">
    <property type="entry name" value="MBT_L3MBTL2_rpt2"/>
    <property type="match status" value="1"/>
</dbReference>
<dbReference type="FunFam" id="2.30.30.140:FF:000010">
    <property type="entry name" value="MBT domain-containing protein 1 isoform X1"/>
    <property type="match status" value="1"/>
</dbReference>
<dbReference type="FunFam" id="2.30.30.140:FF:000015">
    <property type="entry name" value="MBT domain-containing protein 1 isoform X1"/>
    <property type="match status" value="1"/>
</dbReference>
<dbReference type="FunFam" id="2.30.30.140:FF:000019">
    <property type="entry name" value="MBT domain-containing protein 1 isoform X1"/>
    <property type="match status" value="1"/>
</dbReference>
<dbReference type="FunFam" id="2.30.30.140:FF:000032">
    <property type="entry name" value="MBT domain-containing protein 1 isoform X1"/>
    <property type="match status" value="1"/>
</dbReference>
<dbReference type="FunFam" id="3.30.60.160:FF:000001">
    <property type="entry name" value="MBT domain-containing protein 1 isoform X1"/>
    <property type="match status" value="1"/>
</dbReference>
<dbReference type="Gene3D" id="2.30.30.140">
    <property type="match status" value="4"/>
</dbReference>
<dbReference type="Gene3D" id="3.30.60.160">
    <property type="match status" value="1"/>
</dbReference>
<dbReference type="InterPro" id="IPR004092">
    <property type="entry name" value="Mbt"/>
</dbReference>
<dbReference type="InterPro" id="IPR047356">
    <property type="entry name" value="MBT_L3MBTL2_rpt1"/>
</dbReference>
<dbReference type="InterPro" id="IPR047357">
    <property type="entry name" value="MBT_L3MBTL2_rpt2"/>
</dbReference>
<dbReference type="InterPro" id="IPR050548">
    <property type="entry name" value="PcG_chromatin_remod_factors"/>
</dbReference>
<dbReference type="InterPro" id="IPR012313">
    <property type="entry name" value="Znf_FCS"/>
</dbReference>
<dbReference type="InterPro" id="IPR038603">
    <property type="entry name" value="Znf_FCS_sf"/>
</dbReference>
<dbReference type="PANTHER" id="PTHR12247:SF64">
    <property type="entry name" value="LETHAL(3)MALIGNANT BRAIN TUMOR-LIKE PROTEIN 2"/>
    <property type="match status" value="1"/>
</dbReference>
<dbReference type="PANTHER" id="PTHR12247">
    <property type="entry name" value="POLYCOMB GROUP PROTEIN"/>
    <property type="match status" value="1"/>
</dbReference>
<dbReference type="Pfam" id="PF02820">
    <property type="entry name" value="MBT"/>
    <property type="match status" value="4"/>
</dbReference>
<dbReference type="Pfam" id="PF21319">
    <property type="entry name" value="zf-FCS_1"/>
    <property type="match status" value="1"/>
</dbReference>
<dbReference type="SMART" id="SM00561">
    <property type="entry name" value="MBT"/>
    <property type="match status" value="4"/>
</dbReference>
<dbReference type="SUPFAM" id="SSF63748">
    <property type="entry name" value="Tudor/PWWP/MBT"/>
    <property type="match status" value="4"/>
</dbReference>
<dbReference type="PROSITE" id="PS51079">
    <property type="entry name" value="MBT"/>
    <property type="match status" value="4"/>
</dbReference>
<dbReference type="PROSITE" id="PS51024">
    <property type="entry name" value="ZF_FCS"/>
    <property type="match status" value="1"/>
</dbReference>
<name>LMBL2_MOUSE</name>
<accession>P59178</accession>
<accession>Q8BHD5</accession>
<protein>
    <recommendedName>
        <fullName>Lethal(3)malignant brain tumor-like protein 2</fullName>
        <shortName>L(3)mbt-like protein 2</shortName>
    </recommendedName>
</protein>
<gene>
    <name type="primary">L3mbtl2</name>
</gene>
<sequence>MEKPRGTEEAPSSEPMEEEEEDDLDLFGGYDSFRSYNSSAGSESSSYLEESSEAENEDREAGELPTSPLHLFSSANNRSLDGSGSEPAVCEMCGIVGTREAFFSKTKRFCSVSCSRSYSSNSKKASILARLQGKPPTKKAKVLHKAAWSAKIGAFLHAQGTGQLADGTPTGQDALVLGFDWGKFLKDHSYKAAPVSCFKHVPLYDQWEDVMKGMKVEVLNSDAVLPSRVYWIATVIQAAGYRVLLRYEGFENDASHDFWCNLGTVDVHPIGWCAINSKILVPPRTIHAKFTDWKSYLMKRLVGSRTLPADFHIKMVESMKYPFRQGMRLEVVDKTQVSRTRMAVVDTVIGGRLRLLYEDGDSDDDFWCHMWSPLIHPVGWSRRVGHGIKMSDRRCDMSHHPTFRKIYCDAVPYLFKKVRAVYTEGGWFEEGMKLEAIDPLNLGSICVATICKVLLDGYLMICVDGGPSTDGSDWFCYHASSHAIFPATFCQKNDIELTPPKGYETQPFAWETYLEKTKSKAAPARLFNMDCPNHGFKVGMKLEAVDLMEPRLICVATVKRVVHRLLSIHFDGWDNEYDQWVDCESPDIYPVGWCELTGYQLQPPVSAEPNTPQKGKDTTKKKKKQFGKKRKRIPSAKTRPLRQGSKKPLLEDNLEALGVSEPVPDDIIAVCVKEEHQDISSLDRSPSPQLPLPIESIKQERNN</sequence>
<comment type="function">
    <text evidence="1">Putative Polycomb group (PcG) protein. PcG proteins maintain the transcriptionally repressive state of genes, probably via a modification of chromatin, rendering it heritably changed in its expressibility. Its association with a chromatin-remodeling complex suggests that it may contribute to prevent expression of genes that trigger the cell into mitosis. Binds to monomethylated and dimethylated 'Lys-20' on histone H4. Binds histone H3 peptides that are monomethylated or dimethylated on 'Lys-4', 'Lys-9' or 'Lys-27' (By similarity).</text>
</comment>
<comment type="subunit">
    <text evidence="1">Part of the E2F6.com-1 complex in G0 phase composed of E2F6, MGA, MAX, TFDP1, CBX3, BAT8, EUHMTASE1, RING1, RNF2, MBLR, BAT8 and YAF2.</text>
</comment>
<comment type="subcellular location">
    <subcellularLocation>
        <location evidence="6">Nucleus</location>
    </subcellularLocation>
</comment>
<comment type="tissue specificity">
    <text evidence="6">Ubiquitous.</text>
</comment>
<comment type="PTM">
    <text evidence="6">Phosphorylated.</text>
</comment>
<proteinExistence type="evidence at protein level"/>
<feature type="chain" id="PRO_0000084449" description="Lethal(3)malignant brain tumor-like protein 2">
    <location>
        <begin position="1"/>
        <end position="703"/>
    </location>
</feature>
<feature type="repeat" description="MBT 1">
    <location>
        <begin position="179"/>
        <end position="283"/>
    </location>
</feature>
<feature type="repeat" description="MBT 2">
    <location>
        <begin position="291"/>
        <end position="391"/>
    </location>
</feature>
<feature type="repeat" description="MBT 3">
    <location>
        <begin position="397"/>
        <end position="500"/>
    </location>
</feature>
<feature type="repeat" description="MBT 4">
    <location>
        <begin position="508"/>
        <end position="604"/>
    </location>
</feature>
<feature type="zinc finger region" description="FCS-type" evidence="4">
    <location>
        <begin position="81"/>
        <end position="116"/>
    </location>
</feature>
<feature type="region of interest" description="Disordered" evidence="5">
    <location>
        <begin position="1"/>
        <end position="85"/>
    </location>
</feature>
<feature type="region of interest" description="Disordered" evidence="5">
    <location>
        <begin position="604"/>
        <end position="649"/>
    </location>
</feature>
<feature type="region of interest" description="Disordered" evidence="5">
    <location>
        <begin position="675"/>
        <end position="703"/>
    </location>
</feature>
<feature type="compositionally biased region" description="Acidic residues" evidence="5">
    <location>
        <begin position="15"/>
        <end position="25"/>
    </location>
</feature>
<feature type="compositionally biased region" description="Low complexity" evidence="5">
    <location>
        <begin position="35"/>
        <end position="49"/>
    </location>
</feature>
<feature type="compositionally biased region" description="Acidic residues" evidence="5">
    <location>
        <begin position="50"/>
        <end position="60"/>
    </location>
</feature>
<feature type="compositionally biased region" description="Polar residues" evidence="5">
    <location>
        <begin position="73"/>
        <end position="82"/>
    </location>
</feature>
<feature type="compositionally biased region" description="Basic residues" evidence="5">
    <location>
        <begin position="619"/>
        <end position="634"/>
    </location>
</feature>
<feature type="binding site" evidence="4">
    <location>
        <position position="90"/>
    </location>
    <ligand>
        <name>Zn(2+)</name>
        <dbReference type="ChEBI" id="CHEBI:29105"/>
    </ligand>
</feature>
<feature type="binding site" evidence="4">
    <location>
        <position position="93"/>
    </location>
    <ligand>
        <name>Zn(2+)</name>
        <dbReference type="ChEBI" id="CHEBI:29105"/>
    </ligand>
</feature>
<feature type="binding site" evidence="4">
    <location>
        <position position="110"/>
    </location>
    <ligand>
        <name>Zn(2+)</name>
        <dbReference type="ChEBI" id="CHEBI:29105"/>
    </ligand>
</feature>
<feature type="binding site" evidence="4">
    <location>
        <position position="114"/>
    </location>
    <ligand>
        <name>Zn(2+)</name>
        <dbReference type="ChEBI" id="CHEBI:29105"/>
    </ligand>
</feature>
<feature type="modified residue" description="Phosphoserine" evidence="3">
    <location>
        <position position="13"/>
    </location>
</feature>
<feature type="modified residue" description="Phosphoserine" evidence="3">
    <location>
        <position position="67"/>
    </location>
</feature>
<feature type="modified residue" description="Phosphoserine" evidence="3">
    <location>
        <position position="338"/>
    </location>
</feature>
<feature type="modified residue" description="Phosphoserine" evidence="3">
    <location>
        <position position="681"/>
    </location>
</feature>
<feature type="modified residue" description="Phosphoserine" evidence="2">
    <location>
        <position position="685"/>
    </location>
</feature>
<feature type="modified residue" description="Phosphoserine" evidence="3">
    <location>
        <position position="687"/>
    </location>
</feature>
<feature type="cross-link" description="Glycyl lysine isopeptide (Lys-Gly) (interchain with G-Cter in SUMO2)" evidence="3">
    <location>
        <position position="405"/>
    </location>
</feature>
<feature type="cross-link" description="Glycyl lysine isopeptide (Lys-Gly) (interchain with G-Cter in SUMO2)" evidence="3">
    <location>
        <position position="647"/>
    </location>
</feature>
<feature type="cross-link" description="Glycyl lysine isopeptide (Lys-Gly) (interchain with G-Cter in SUMO2)" evidence="3">
    <location>
        <position position="673"/>
    </location>
</feature>
<feature type="cross-link" description="Glycyl lysine isopeptide (Lys-Gly) (interchain with G-Cter in SUMO1); alternate" evidence="3">
    <location>
        <position position="698"/>
    </location>
</feature>
<feature type="cross-link" description="Glycyl lysine isopeptide (Lys-Gly) (interchain with G-Cter in SUMO2); alternate" evidence="3">
    <location>
        <position position="698"/>
    </location>
</feature>
<feature type="sequence conflict" description="In Ref. 4; AAH23933/AAH30864." evidence="7" ref="4">
    <original>L</original>
    <variation>P</variation>
    <location>
        <position position="682"/>
    </location>
</feature>
<organism>
    <name type="scientific">Mus musculus</name>
    <name type="common">Mouse</name>
    <dbReference type="NCBI Taxonomy" id="10090"/>
    <lineage>
        <taxon>Eukaryota</taxon>
        <taxon>Metazoa</taxon>
        <taxon>Chordata</taxon>
        <taxon>Craniata</taxon>
        <taxon>Vertebrata</taxon>
        <taxon>Euteleostomi</taxon>
        <taxon>Mammalia</taxon>
        <taxon>Eutheria</taxon>
        <taxon>Euarchontoglires</taxon>
        <taxon>Glires</taxon>
        <taxon>Rodentia</taxon>
        <taxon>Myomorpha</taxon>
        <taxon>Muroidea</taxon>
        <taxon>Muridae</taxon>
        <taxon>Murinae</taxon>
        <taxon>Mus</taxon>
        <taxon>Mus</taxon>
    </lineage>
</organism>